<sequence length="208" mass="23010">MSKVLFVKANDRPAEQAVSSKMYETFVSTYKEANPNTEITELDLFALDLPYYGNIAISGGYKRSQGMELTAEEEKAVATVDQYLNQFLEADKVVFAFPLWNFTVPAPLITYISYLSQAGKTFKYTANGPEGLAGGKKVVVLGARGSDYSSEQMAPMEMAVNYVTTVLGFWGITNPETVVIEGHNQYPDRSQQIVEEGLEKVKKVAAKF</sequence>
<gene>
    <name evidence="1" type="primary">azoR2</name>
    <name type="ordered locus">BCE_1993</name>
</gene>
<dbReference type="EC" id="1.6.5.-" evidence="1"/>
<dbReference type="EC" id="1.7.1.17" evidence="1"/>
<dbReference type="EMBL" id="AE017194">
    <property type="protein sequence ID" value="AAS40917.1"/>
    <property type="molecule type" value="Genomic_DNA"/>
</dbReference>
<dbReference type="SMR" id="Q739Z4"/>
<dbReference type="KEGG" id="bca:BCE_1993"/>
<dbReference type="HOGENOM" id="CLU_088964_3_1_9"/>
<dbReference type="Proteomes" id="UP000002527">
    <property type="component" value="Chromosome"/>
</dbReference>
<dbReference type="GO" id="GO:0009055">
    <property type="term" value="F:electron transfer activity"/>
    <property type="evidence" value="ECO:0007669"/>
    <property type="project" value="UniProtKB-UniRule"/>
</dbReference>
<dbReference type="GO" id="GO:0010181">
    <property type="term" value="F:FMN binding"/>
    <property type="evidence" value="ECO:0007669"/>
    <property type="project" value="UniProtKB-UniRule"/>
</dbReference>
<dbReference type="GO" id="GO:0016652">
    <property type="term" value="F:oxidoreductase activity, acting on NAD(P)H as acceptor"/>
    <property type="evidence" value="ECO:0007669"/>
    <property type="project" value="UniProtKB-UniRule"/>
</dbReference>
<dbReference type="GO" id="GO:0016655">
    <property type="term" value="F:oxidoreductase activity, acting on NAD(P)H, quinone or similar compound as acceptor"/>
    <property type="evidence" value="ECO:0007669"/>
    <property type="project" value="InterPro"/>
</dbReference>
<dbReference type="Gene3D" id="3.40.50.360">
    <property type="match status" value="1"/>
</dbReference>
<dbReference type="HAMAP" id="MF_01216">
    <property type="entry name" value="Azoreductase_type1"/>
    <property type="match status" value="1"/>
</dbReference>
<dbReference type="InterPro" id="IPR003680">
    <property type="entry name" value="Flavodoxin_fold"/>
</dbReference>
<dbReference type="InterPro" id="IPR029039">
    <property type="entry name" value="Flavoprotein-like_sf"/>
</dbReference>
<dbReference type="InterPro" id="IPR050104">
    <property type="entry name" value="FMN-dep_NADH:Q_OxRdtase_AzoR1"/>
</dbReference>
<dbReference type="InterPro" id="IPR023048">
    <property type="entry name" value="NADH:quinone_OxRdtase_FMN_depd"/>
</dbReference>
<dbReference type="NCBIfam" id="NF010074">
    <property type="entry name" value="PRK13555.1"/>
    <property type="match status" value="1"/>
</dbReference>
<dbReference type="NCBIfam" id="NF010075">
    <property type="entry name" value="PRK13556.1"/>
    <property type="match status" value="1"/>
</dbReference>
<dbReference type="PANTHER" id="PTHR43741">
    <property type="entry name" value="FMN-DEPENDENT NADH-AZOREDUCTASE 1"/>
    <property type="match status" value="1"/>
</dbReference>
<dbReference type="PANTHER" id="PTHR43741:SF4">
    <property type="entry name" value="FMN-DEPENDENT NADH:QUINONE OXIDOREDUCTASE"/>
    <property type="match status" value="1"/>
</dbReference>
<dbReference type="Pfam" id="PF02525">
    <property type="entry name" value="Flavodoxin_2"/>
    <property type="match status" value="1"/>
</dbReference>
<dbReference type="SUPFAM" id="SSF52218">
    <property type="entry name" value="Flavoproteins"/>
    <property type="match status" value="1"/>
</dbReference>
<organism>
    <name type="scientific">Bacillus cereus (strain ATCC 10987 / NRS 248)</name>
    <dbReference type="NCBI Taxonomy" id="222523"/>
    <lineage>
        <taxon>Bacteria</taxon>
        <taxon>Bacillati</taxon>
        <taxon>Bacillota</taxon>
        <taxon>Bacilli</taxon>
        <taxon>Bacillales</taxon>
        <taxon>Bacillaceae</taxon>
        <taxon>Bacillus</taxon>
        <taxon>Bacillus cereus group</taxon>
    </lineage>
</organism>
<reference key="1">
    <citation type="journal article" date="2004" name="Nucleic Acids Res.">
        <title>The genome sequence of Bacillus cereus ATCC 10987 reveals metabolic adaptations and a large plasmid related to Bacillus anthracis pXO1.</title>
        <authorList>
            <person name="Rasko D.A."/>
            <person name="Ravel J."/>
            <person name="Oekstad O.A."/>
            <person name="Helgason E."/>
            <person name="Cer R.Z."/>
            <person name="Jiang L."/>
            <person name="Shores K.A."/>
            <person name="Fouts D.E."/>
            <person name="Tourasse N.J."/>
            <person name="Angiuoli S.V."/>
            <person name="Kolonay J.F."/>
            <person name="Nelson W.C."/>
            <person name="Kolstoe A.-B."/>
            <person name="Fraser C.M."/>
            <person name="Read T.D."/>
        </authorList>
    </citation>
    <scope>NUCLEOTIDE SEQUENCE [LARGE SCALE GENOMIC DNA]</scope>
    <source>
        <strain>ATCC 10987 / NRS 248</strain>
    </source>
</reference>
<accession>Q739Z4</accession>
<comment type="function">
    <text evidence="1">Quinone reductase that provides resistance to thiol-specific stress caused by electrophilic quinones.</text>
</comment>
<comment type="function">
    <text evidence="1">Also exhibits azoreductase activity. Catalyzes the reductive cleavage of the azo bond in aromatic azo compounds to the corresponding amines.</text>
</comment>
<comment type="catalytic activity">
    <reaction evidence="1">
        <text>2 a quinone + NADH + H(+) = 2 a 1,4-benzosemiquinone + NAD(+)</text>
        <dbReference type="Rhea" id="RHEA:65952"/>
        <dbReference type="ChEBI" id="CHEBI:15378"/>
        <dbReference type="ChEBI" id="CHEBI:57540"/>
        <dbReference type="ChEBI" id="CHEBI:57945"/>
        <dbReference type="ChEBI" id="CHEBI:132124"/>
        <dbReference type="ChEBI" id="CHEBI:134225"/>
    </reaction>
</comment>
<comment type="catalytic activity">
    <reaction evidence="1">
        <text>N,N-dimethyl-1,4-phenylenediamine + anthranilate + 2 NAD(+) = 2-(4-dimethylaminophenyl)diazenylbenzoate + 2 NADH + 2 H(+)</text>
        <dbReference type="Rhea" id="RHEA:55872"/>
        <dbReference type="ChEBI" id="CHEBI:15378"/>
        <dbReference type="ChEBI" id="CHEBI:15783"/>
        <dbReference type="ChEBI" id="CHEBI:16567"/>
        <dbReference type="ChEBI" id="CHEBI:57540"/>
        <dbReference type="ChEBI" id="CHEBI:57945"/>
        <dbReference type="ChEBI" id="CHEBI:71579"/>
        <dbReference type="EC" id="1.7.1.17"/>
    </reaction>
</comment>
<comment type="cofactor">
    <cofactor evidence="1">
        <name>FMN</name>
        <dbReference type="ChEBI" id="CHEBI:58210"/>
    </cofactor>
    <text evidence="1">Binds 1 FMN per subunit.</text>
</comment>
<comment type="subunit">
    <text evidence="1">Homodimer.</text>
</comment>
<comment type="similarity">
    <text evidence="1">Belongs to the azoreductase type 1 family.</text>
</comment>
<protein>
    <recommendedName>
        <fullName evidence="1">FMN-dependent NADH:quinone oxidoreductase 2</fullName>
        <ecNumber evidence="1">1.6.5.-</ecNumber>
    </recommendedName>
    <alternativeName>
        <fullName evidence="1">Azo-dye reductase 2</fullName>
    </alternativeName>
    <alternativeName>
        <fullName evidence="1">FMN-dependent NADH-azo compound oxidoreductase 2</fullName>
    </alternativeName>
    <alternativeName>
        <fullName evidence="1">FMN-dependent NADH-azoreductase 2</fullName>
        <ecNumber evidence="1">1.7.1.17</ecNumber>
    </alternativeName>
</protein>
<name>AZOR2_BACC1</name>
<feature type="chain" id="PRO_0000245878" description="FMN-dependent NADH:quinone oxidoreductase 2">
    <location>
        <begin position="1"/>
        <end position="208"/>
    </location>
</feature>
<evidence type="ECO:0000255" key="1">
    <source>
        <dbReference type="HAMAP-Rule" id="MF_01216"/>
    </source>
</evidence>
<proteinExistence type="inferred from homology"/>
<keyword id="KW-0285">Flavoprotein</keyword>
<keyword id="KW-0288">FMN</keyword>
<keyword id="KW-0520">NAD</keyword>
<keyword id="KW-0560">Oxidoreductase</keyword>